<dbReference type="EC" id="3.2.1.52" evidence="1"/>
<dbReference type="EMBL" id="BX950851">
    <property type="protein sequence ID" value="CAG74717.1"/>
    <property type="molecule type" value="Genomic_DNA"/>
</dbReference>
<dbReference type="RefSeq" id="WP_011093386.1">
    <property type="nucleotide sequence ID" value="NC_004547.2"/>
</dbReference>
<dbReference type="SMR" id="Q6D674"/>
<dbReference type="STRING" id="218491.ECA1813"/>
<dbReference type="CAZy" id="GH3">
    <property type="family name" value="Glycoside Hydrolase Family 3"/>
</dbReference>
<dbReference type="KEGG" id="eca:ECA1813"/>
<dbReference type="eggNOG" id="COG1472">
    <property type="taxonomic scope" value="Bacteria"/>
</dbReference>
<dbReference type="HOGENOM" id="CLU_008392_0_0_6"/>
<dbReference type="OrthoDB" id="9786661at2"/>
<dbReference type="UniPathway" id="UPA00544"/>
<dbReference type="Proteomes" id="UP000007966">
    <property type="component" value="Chromosome"/>
</dbReference>
<dbReference type="GO" id="GO:0005737">
    <property type="term" value="C:cytoplasm"/>
    <property type="evidence" value="ECO:0007669"/>
    <property type="project" value="UniProtKB-SubCell"/>
</dbReference>
<dbReference type="GO" id="GO:0004563">
    <property type="term" value="F:beta-N-acetylhexosaminidase activity"/>
    <property type="evidence" value="ECO:0007669"/>
    <property type="project" value="UniProtKB-UniRule"/>
</dbReference>
<dbReference type="GO" id="GO:0005975">
    <property type="term" value="P:carbohydrate metabolic process"/>
    <property type="evidence" value="ECO:0007669"/>
    <property type="project" value="InterPro"/>
</dbReference>
<dbReference type="GO" id="GO:0051301">
    <property type="term" value="P:cell division"/>
    <property type="evidence" value="ECO:0007669"/>
    <property type="project" value="UniProtKB-KW"/>
</dbReference>
<dbReference type="GO" id="GO:0071555">
    <property type="term" value="P:cell wall organization"/>
    <property type="evidence" value="ECO:0007669"/>
    <property type="project" value="UniProtKB-KW"/>
</dbReference>
<dbReference type="GO" id="GO:0009252">
    <property type="term" value="P:peptidoglycan biosynthetic process"/>
    <property type="evidence" value="ECO:0007669"/>
    <property type="project" value="UniProtKB-KW"/>
</dbReference>
<dbReference type="GO" id="GO:0009254">
    <property type="term" value="P:peptidoglycan turnover"/>
    <property type="evidence" value="ECO:0007669"/>
    <property type="project" value="UniProtKB-UniRule"/>
</dbReference>
<dbReference type="GO" id="GO:0008360">
    <property type="term" value="P:regulation of cell shape"/>
    <property type="evidence" value="ECO:0007669"/>
    <property type="project" value="UniProtKB-KW"/>
</dbReference>
<dbReference type="FunFam" id="3.20.20.300:FF:000001">
    <property type="entry name" value="Beta-hexosaminidase"/>
    <property type="match status" value="1"/>
</dbReference>
<dbReference type="Gene3D" id="3.20.20.300">
    <property type="entry name" value="Glycoside hydrolase, family 3, N-terminal domain"/>
    <property type="match status" value="1"/>
</dbReference>
<dbReference type="HAMAP" id="MF_00364">
    <property type="entry name" value="NagZ"/>
    <property type="match status" value="1"/>
</dbReference>
<dbReference type="InterPro" id="IPR022956">
    <property type="entry name" value="Beta_hexosaminidase_bac"/>
</dbReference>
<dbReference type="InterPro" id="IPR019800">
    <property type="entry name" value="Glyco_hydro_3_AS"/>
</dbReference>
<dbReference type="InterPro" id="IPR001764">
    <property type="entry name" value="Glyco_hydro_3_N"/>
</dbReference>
<dbReference type="InterPro" id="IPR036962">
    <property type="entry name" value="Glyco_hydro_3_N_sf"/>
</dbReference>
<dbReference type="InterPro" id="IPR017853">
    <property type="entry name" value="Glycoside_hydrolase_SF"/>
</dbReference>
<dbReference type="InterPro" id="IPR050226">
    <property type="entry name" value="NagZ_Beta-hexosaminidase"/>
</dbReference>
<dbReference type="NCBIfam" id="NF003740">
    <property type="entry name" value="PRK05337.1"/>
    <property type="match status" value="1"/>
</dbReference>
<dbReference type="PANTHER" id="PTHR30480:SF13">
    <property type="entry name" value="BETA-HEXOSAMINIDASE"/>
    <property type="match status" value="1"/>
</dbReference>
<dbReference type="PANTHER" id="PTHR30480">
    <property type="entry name" value="BETA-HEXOSAMINIDASE-RELATED"/>
    <property type="match status" value="1"/>
</dbReference>
<dbReference type="Pfam" id="PF00933">
    <property type="entry name" value="Glyco_hydro_3"/>
    <property type="match status" value="1"/>
</dbReference>
<dbReference type="SUPFAM" id="SSF51445">
    <property type="entry name" value="(Trans)glycosidases"/>
    <property type="match status" value="1"/>
</dbReference>
<dbReference type="PROSITE" id="PS00775">
    <property type="entry name" value="GLYCOSYL_HYDROL_F3"/>
    <property type="match status" value="1"/>
</dbReference>
<name>NAGZ_PECAS</name>
<accession>Q6D674</accession>
<reference key="1">
    <citation type="journal article" date="2004" name="Proc. Natl. Acad. Sci. U.S.A.">
        <title>Genome sequence of the enterobacterial phytopathogen Erwinia carotovora subsp. atroseptica and characterization of virulence factors.</title>
        <authorList>
            <person name="Bell K.S."/>
            <person name="Sebaihia M."/>
            <person name="Pritchard L."/>
            <person name="Holden M.T.G."/>
            <person name="Hyman L.J."/>
            <person name="Holeva M.C."/>
            <person name="Thomson N.R."/>
            <person name="Bentley S.D."/>
            <person name="Churcher L.J.C."/>
            <person name="Mungall K."/>
            <person name="Atkin R."/>
            <person name="Bason N."/>
            <person name="Brooks K."/>
            <person name="Chillingworth T."/>
            <person name="Clark K."/>
            <person name="Doggett J."/>
            <person name="Fraser A."/>
            <person name="Hance Z."/>
            <person name="Hauser H."/>
            <person name="Jagels K."/>
            <person name="Moule S."/>
            <person name="Norbertczak H."/>
            <person name="Ormond D."/>
            <person name="Price C."/>
            <person name="Quail M.A."/>
            <person name="Sanders M."/>
            <person name="Walker D."/>
            <person name="Whitehead S."/>
            <person name="Salmond G.P.C."/>
            <person name="Birch P.R.J."/>
            <person name="Parkhill J."/>
            <person name="Toth I.K."/>
        </authorList>
    </citation>
    <scope>NUCLEOTIDE SEQUENCE [LARGE SCALE GENOMIC DNA]</scope>
    <source>
        <strain>SCRI 1043 / ATCC BAA-672</strain>
    </source>
</reference>
<comment type="function">
    <text evidence="1">Plays a role in peptidoglycan recycling by cleaving the terminal beta-1,4-linked N-acetylglucosamine (GlcNAc) from peptide-linked peptidoglycan fragments, giving rise to free GlcNAc, anhydro-N-acetylmuramic acid and anhydro-N-acetylmuramic acid-linked peptides.</text>
</comment>
<comment type="catalytic activity">
    <reaction evidence="1">
        <text>Hydrolysis of terminal non-reducing N-acetyl-D-hexosamine residues in N-acetyl-beta-D-hexosaminides.</text>
        <dbReference type="EC" id="3.2.1.52"/>
    </reaction>
</comment>
<comment type="pathway">
    <text evidence="1">Cell wall biogenesis; peptidoglycan recycling.</text>
</comment>
<comment type="subcellular location">
    <subcellularLocation>
        <location evidence="1">Cytoplasm</location>
    </subcellularLocation>
</comment>
<comment type="similarity">
    <text evidence="1">Belongs to the glycosyl hydrolase 3 family. NagZ subfamily.</text>
</comment>
<evidence type="ECO:0000255" key="1">
    <source>
        <dbReference type="HAMAP-Rule" id="MF_00364"/>
    </source>
</evidence>
<keyword id="KW-0131">Cell cycle</keyword>
<keyword id="KW-0132">Cell division</keyword>
<keyword id="KW-0133">Cell shape</keyword>
<keyword id="KW-0961">Cell wall biogenesis/degradation</keyword>
<keyword id="KW-0963">Cytoplasm</keyword>
<keyword id="KW-0326">Glycosidase</keyword>
<keyword id="KW-0378">Hydrolase</keyword>
<keyword id="KW-0573">Peptidoglycan synthesis</keyword>
<keyword id="KW-1185">Reference proteome</keyword>
<feature type="chain" id="PRO_0000234912" description="Beta-hexosaminidase">
    <location>
        <begin position="1"/>
        <end position="342"/>
    </location>
</feature>
<feature type="active site" description="Proton donor/acceptor" evidence="1">
    <location>
        <position position="176"/>
    </location>
</feature>
<feature type="active site" description="Nucleophile" evidence="1">
    <location>
        <position position="248"/>
    </location>
</feature>
<feature type="binding site" evidence="1">
    <location>
        <position position="62"/>
    </location>
    <ligand>
        <name>substrate</name>
    </ligand>
</feature>
<feature type="binding site" evidence="1">
    <location>
        <position position="70"/>
    </location>
    <ligand>
        <name>substrate</name>
    </ligand>
</feature>
<feature type="binding site" evidence="1">
    <location>
        <position position="133"/>
    </location>
    <ligand>
        <name>substrate</name>
    </ligand>
</feature>
<feature type="binding site" evidence="1">
    <location>
        <begin position="163"/>
        <end position="164"/>
    </location>
    <ligand>
        <name>substrate</name>
    </ligand>
</feature>
<feature type="site" description="Important for catalytic activity" evidence="1">
    <location>
        <position position="174"/>
    </location>
</feature>
<organism>
    <name type="scientific">Pectobacterium atrosepticum (strain SCRI 1043 / ATCC BAA-672)</name>
    <name type="common">Erwinia carotovora subsp. atroseptica</name>
    <dbReference type="NCBI Taxonomy" id="218491"/>
    <lineage>
        <taxon>Bacteria</taxon>
        <taxon>Pseudomonadati</taxon>
        <taxon>Pseudomonadota</taxon>
        <taxon>Gammaproteobacteria</taxon>
        <taxon>Enterobacterales</taxon>
        <taxon>Pectobacteriaceae</taxon>
        <taxon>Pectobacterium</taxon>
    </lineage>
</organism>
<sequence>MGPVMLDVASYELDAEDREVLEHPLVGGVILFTRNFHDVAQLRELVRQIRAASHERLVVSVDQEGGRVQRFRDGFTRLPAAQAFAALNSVSEAQRLAEEGGWLMAAEMIAMDIDISFAPVLDIGHQSAAIGERSFHEQPEMALAVAQSFIRGMHSAGMKVTGKHFPGHGAVSADSHKETPRDPRPLAEIRAHDMLIFKALIQSQQLDAIMPAHVIYTEADPHPASGSSYWLKTVLREELGFDGIIFSDDLSMEGAAVMGSYPERAQAALQAGCDMILVCNHREGAISVLDNLSPVKAEQLTRLYHQGSFSRRELLDSPRWKLANQALTSLSERWQAHKNGEK</sequence>
<gene>
    <name evidence="1" type="primary">nagZ</name>
    <name type="ordered locus">ECA1813</name>
</gene>
<protein>
    <recommendedName>
        <fullName evidence="1">Beta-hexosaminidase</fullName>
        <ecNumber evidence="1">3.2.1.52</ecNumber>
    </recommendedName>
    <alternativeName>
        <fullName evidence="1">Beta-N-acetylhexosaminidase</fullName>
    </alternativeName>
    <alternativeName>
        <fullName evidence="1">N-acetyl-beta-glucosaminidase</fullName>
    </alternativeName>
</protein>
<proteinExistence type="inferred from homology"/>